<comment type="function">
    <text>Involved in methylamine metabolism. Essential for the maturation of the beta subunit of MADH, presumably via a step in the biosynthesis of tryptophan tryptophylquinone (TTQ), the cofactor of MADH.</text>
</comment>
<comment type="pathway">
    <text>One-carbon metabolism; methylamine degradation.</text>
</comment>
<comment type="subcellular location">
    <subcellularLocation>
        <location>Periplasm</location>
    </subcellularLocation>
</comment>
<comment type="PTM">
    <text evidence="3">Binds 2 heme c groups covalently per subunit.</text>
</comment>
<evidence type="ECO:0000255" key="1"/>
<evidence type="ECO:0000255" key="2">
    <source>
        <dbReference type="PROSITE-ProRule" id="PRU00433"/>
    </source>
</evidence>
<evidence type="ECO:0000305" key="3"/>
<organism>
    <name type="scientific">Methylophilus methylotrophus</name>
    <name type="common">Bacterium W3A1</name>
    <dbReference type="NCBI Taxonomy" id="17"/>
    <lineage>
        <taxon>Bacteria</taxon>
        <taxon>Pseudomonadati</taxon>
        <taxon>Pseudomonadota</taxon>
        <taxon>Betaproteobacteria</taxon>
        <taxon>Nitrosomonadales</taxon>
        <taxon>Methylophilaceae</taxon>
        <taxon>Methylophilus</taxon>
    </lineage>
</organism>
<protein>
    <recommendedName>
        <fullName>Methylamine utilization protein MauG</fullName>
        <ecNumber>1.-.-.-</ecNumber>
    </recommendedName>
</protein>
<proteinExistence type="inferred from homology"/>
<sequence length="335" mass="37265">MLFRHLVLIISTLMVANTAWSANLPPREKFKRPDSIPAPLSNPLTLEKATLGKTLFFDQRLSRSGGMACATCHSPDQRWSDGRTLPLQAESVSNARRTPTVLNSAWLSALMWDGRATTLEEQAVLPITTAHEMNFDLASLVSRLQRIEGYRPLFTQAFGDDSISQQRITQALASFQRTLVSNIAPFDRWVAGDEQAISESAKRGFAVFNDKNKANCVACHSSWRFTDDSFHDIGLPSKDLGRGAKVPSQVTLMQHAFKTPSLRDLSIDGPYMHDGSIRGLKTVIKHYKSEAIQRESLSKDMQKFELSNLEESDLIAFIQSLDGGALKIQAPMMPE</sequence>
<name>MAUG_METME</name>
<dbReference type="EC" id="1.-.-.-"/>
<dbReference type="EMBL" id="L26407">
    <property type="protein sequence ID" value="AAB46952.1"/>
    <property type="molecule type" value="Genomic_DNA"/>
</dbReference>
<dbReference type="PIR" id="T10074">
    <property type="entry name" value="T10074"/>
</dbReference>
<dbReference type="SMR" id="Q50233"/>
<dbReference type="STRING" id="1122236.GCA_000378225_02088"/>
<dbReference type="PeroxiBase" id="5006">
    <property type="entry name" value="MmeMauG"/>
</dbReference>
<dbReference type="UniPathway" id="UPA00895"/>
<dbReference type="GO" id="GO:0042597">
    <property type="term" value="C:periplasmic space"/>
    <property type="evidence" value="ECO:0007669"/>
    <property type="project" value="UniProtKB-SubCell"/>
</dbReference>
<dbReference type="GO" id="GO:0005509">
    <property type="term" value="F:calcium ion binding"/>
    <property type="evidence" value="ECO:0007669"/>
    <property type="project" value="InterPro"/>
</dbReference>
<dbReference type="GO" id="GO:0004130">
    <property type="term" value="F:cytochrome-c peroxidase activity"/>
    <property type="evidence" value="ECO:0007669"/>
    <property type="project" value="TreeGrafter"/>
</dbReference>
<dbReference type="GO" id="GO:0009055">
    <property type="term" value="F:electron transfer activity"/>
    <property type="evidence" value="ECO:0007669"/>
    <property type="project" value="InterPro"/>
</dbReference>
<dbReference type="GO" id="GO:0020037">
    <property type="term" value="F:heme binding"/>
    <property type="evidence" value="ECO:0007669"/>
    <property type="project" value="InterPro"/>
</dbReference>
<dbReference type="GO" id="GO:0030416">
    <property type="term" value="P:methylamine metabolic process"/>
    <property type="evidence" value="ECO:0007669"/>
    <property type="project" value="InterPro"/>
</dbReference>
<dbReference type="FunFam" id="1.10.760.10:FF:000019">
    <property type="entry name" value="Di-heme cytochrome C peroxidase"/>
    <property type="match status" value="1"/>
</dbReference>
<dbReference type="Gene3D" id="1.10.760.10">
    <property type="entry name" value="Cytochrome c-like domain"/>
    <property type="match status" value="2"/>
</dbReference>
<dbReference type="InterPro" id="IPR009056">
    <property type="entry name" value="Cyt_c-like_dom"/>
</dbReference>
<dbReference type="InterPro" id="IPR036909">
    <property type="entry name" value="Cyt_c-like_dom_sf"/>
</dbReference>
<dbReference type="InterPro" id="IPR051395">
    <property type="entry name" value="Cytochrome_c_Peroxidase/MauG"/>
</dbReference>
<dbReference type="InterPro" id="IPR004852">
    <property type="entry name" value="Di-haem_cyt_c_peroxidsae"/>
</dbReference>
<dbReference type="InterPro" id="IPR026259">
    <property type="entry name" value="MauG/Cytc_peroxidase"/>
</dbReference>
<dbReference type="InterPro" id="IPR022394">
    <property type="entry name" value="Methylamine_utilis_MauG"/>
</dbReference>
<dbReference type="NCBIfam" id="TIGR03791">
    <property type="entry name" value="TTQ_mauG"/>
    <property type="match status" value="1"/>
</dbReference>
<dbReference type="PANTHER" id="PTHR30600:SF10">
    <property type="entry name" value="BLL6722 PROTEIN"/>
    <property type="match status" value="1"/>
</dbReference>
<dbReference type="PANTHER" id="PTHR30600">
    <property type="entry name" value="CYTOCHROME C PEROXIDASE-RELATED"/>
    <property type="match status" value="1"/>
</dbReference>
<dbReference type="Pfam" id="PF03150">
    <property type="entry name" value="CCP_MauG"/>
    <property type="match status" value="1"/>
</dbReference>
<dbReference type="PIRSF" id="PIRSF000294">
    <property type="entry name" value="Cytochrome-c_peroxidase"/>
    <property type="match status" value="1"/>
</dbReference>
<dbReference type="SUPFAM" id="SSF46626">
    <property type="entry name" value="Cytochrome c"/>
    <property type="match status" value="2"/>
</dbReference>
<dbReference type="PROSITE" id="PS51007">
    <property type="entry name" value="CYTC"/>
    <property type="match status" value="2"/>
</dbReference>
<dbReference type="PROSITE" id="PS51008">
    <property type="entry name" value="MULTIHEME_CYTC"/>
    <property type="match status" value="2"/>
</dbReference>
<feature type="signal peptide" evidence="1">
    <location>
        <begin position="1"/>
        <end position="18"/>
    </location>
</feature>
<feature type="chain" id="PRO_0000006602" description="Methylamine utilization protein MauG">
    <location>
        <begin position="19"/>
        <end position="335"/>
    </location>
</feature>
<feature type="binding site" description="covalent" evidence="2">
    <location>
        <position position="69"/>
    </location>
    <ligand>
        <name>heme c</name>
        <dbReference type="ChEBI" id="CHEBI:61717"/>
        <label>1</label>
    </ligand>
</feature>
<feature type="binding site" description="covalent" evidence="2">
    <location>
        <position position="72"/>
    </location>
    <ligand>
        <name>heme c</name>
        <dbReference type="ChEBI" id="CHEBI:61717"/>
        <label>1</label>
    </ligand>
</feature>
<feature type="binding site" description="axial binding residue" evidence="2">
    <location>
        <position position="73"/>
    </location>
    <ligand>
        <name>heme c</name>
        <dbReference type="ChEBI" id="CHEBI:61717"/>
        <label>1</label>
    </ligand>
    <ligandPart>
        <name>Fe</name>
        <dbReference type="ChEBI" id="CHEBI:18248"/>
    </ligandPart>
</feature>
<feature type="binding site" description="covalent" evidence="2">
    <location>
        <position position="216"/>
    </location>
    <ligand>
        <name>heme c</name>
        <dbReference type="ChEBI" id="CHEBI:61717"/>
        <label>2</label>
    </ligand>
</feature>
<feature type="binding site" description="covalent" evidence="2">
    <location>
        <position position="219"/>
    </location>
    <ligand>
        <name>heme c</name>
        <dbReference type="ChEBI" id="CHEBI:61717"/>
        <label>2</label>
    </ligand>
</feature>
<feature type="binding site" description="axial binding residue" evidence="2">
    <location>
        <position position="220"/>
    </location>
    <ligand>
        <name>heme c</name>
        <dbReference type="ChEBI" id="CHEBI:61717"/>
        <label>2</label>
    </ligand>
    <ligandPart>
        <name>Fe</name>
        <dbReference type="ChEBI" id="CHEBI:18248"/>
    </ligandPart>
</feature>
<feature type="binding site" description="axial binding residue" evidence="2">
    <location>
        <position position="273"/>
    </location>
    <ligand>
        <name>heme c</name>
        <dbReference type="ChEBI" id="CHEBI:61717"/>
        <label>1</label>
    </ligand>
    <ligandPart>
        <name>Fe</name>
        <dbReference type="ChEBI" id="CHEBI:18248"/>
    </ligandPart>
</feature>
<keyword id="KW-0249">Electron transport</keyword>
<keyword id="KW-0349">Heme</keyword>
<keyword id="KW-0408">Iron</keyword>
<keyword id="KW-0479">Metal-binding</keyword>
<keyword id="KW-0560">Oxidoreductase</keyword>
<keyword id="KW-0574">Periplasm</keyword>
<keyword id="KW-0732">Signal</keyword>
<keyword id="KW-0813">Transport</keyword>
<reference key="1">
    <citation type="journal article" date="1994" name="J. Bacteriol.">
        <title>Organization of the methylamine utilization (mau) genes in Methylophilus methylotrophus W3A1-NS.</title>
        <authorList>
            <person name="Chistoserdov A.Y."/>
            <person name="McIntire W.S."/>
            <person name="Mathews F.S."/>
            <person name="Lidstrom M.E."/>
        </authorList>
    </citation>
    <scope>NUCLEOTIDE SEQUENCE [GENOMIC DNA]</scope>
</reference>
<gene>
    <name type="primary">mauG</name>
</gene>
<accession>Q50233</accession>